<comment type="cofactor">
    <cofactor evidence="1">
        <name>[4Fe-4S] cluster</name>
        <dbReference type="ChEBI" id="CHEBI:49883"/>
    </cofactor>
    <text evidence="1">Binds 1 [4Fe-4S] cluster. The cluster is coordinated with 3 cysteines and an exchangeable S-adenosyl-L-methionine.</text>
</comment>
<comment type="subcellular location">
    <subcellularLocation>
        <location evidence="4">Cytoplasm</location>
    </subcellularLocation>
</comment>
<comment type="similarity">
    <text evidence="4">Belongs to the radical SAM superfamily. RlmN family.</text>
</comment>
<comment type="sequence caution" evidence="4">
    <conflict type="erroneous initiation">
        <sequence resource="EMBL-CDS" id="CAI08995"/>
    </conflict>
</comment>
<protein>
    <recommendedName>
        <fullName>Probable RNA methyltransferase AZOSEA28700</fullName>
        <ecNumber>2.1.1.-</ecNumber>
    </recommendedName>
</protein>
<name>Y2870_AROAE</name>
<feature type="chain" id="PRO_0000350023" description="Probable RNA methyltransferase AZOSEA28700">
    <location>
        <begin position="1"/>
        <end position="354"/>
    </location>
</feature>
<feature type="domain" description="Radical SAM core" evidence="3">
    <location>
        <begin position="91"/>
        <end position="317"/>
    </location>
</feature>
<feature type="active site" description="Proton acceptor" evidence="2">
    <location>
        <position position="88"/>
    </location>
</feature>
<feature type="active site" description="S-methylcysteine intermediate" evidence="1">
    <location>
        <position position="322"/>
    </location>
</feature>
<feature type="binding site" evidence="1">
    <location>
        <position position="105"/>
    </location>
    <ligand>
        <name>[4Fe-4S] cluster</name>
        <dbReference type="ChEBI" id="CHEBI:49883"/>
        <note>4Fe-4S-S-AdoMet</note>
    </ligand>
</feature>
<feature type="binding site" evidence="1">
    <location>
        <position position="109"/>
    </location>
    <ligand>
        <name>[4Fe-4S] cluster</name>
        <dbReference type="ChEBI" id="CHEBI:49883"/>
        <note>4Fe-4S-S-AdoMet</note>
    </ligand>
</feature>
<feature type="binding site" evidence="1">
    <location>
        <position position="112"/>
    </location>
    <ligand>
        <name>[4Fe-4S] cluster</name>
        <dbReference type="ChEBI" id="CHEBI:49883"/>
        <note>4Fe-4S-S-AdoMet</note>
    </ligand>
</feature>
<feature type="binding site" evidence="1">
    <location>
        <begin position="150"/>
        <end position="151"/>
    </location>
    <ligand>
        <name>S-adenosyl-L-methionine</name>
        <dbReference type="ChEBI" id="CHEBI:59789"/>
    </ligand>
</feature>
<feature type="binding site" evidence="1">
    <location>
        <position position="180"/>
    </location>
    <ligand>
        <name>S-adenosyl-L-methionine</name>
        <dbReference type="ChEBI" id="CHEBI:59789"/>
    </ligand>
</feature>
<feature type="binding site" evidence="1">
    <location>
        <begin position="203"/>
        <end position="205"/>
    </location>
    <ligand>
        <name>S-adenosyl-L-methionine</name>
        <dbReference type="ChEBI" id="CHEBI:59789"/>
    </ligand>
</feature>
<feature type="binding site" evidence="1">
    <location>
        <position position="279"/>
    </location>
    <ligand>
        <name>S-adenosyl-L-methionine</name>
        <dbReference type="ChEBI" id="CHEBI:59789"/>
    </ligand>
</feature>
<feature type="disulfide bond" description="(transient)" evidence="1">
    <location>
        <begin position="98"/>
        <end position="322"/>
    </location>
</feature>
<organism>
    <name type="scientific">Aromatoleum aromaticum (strain DSM 19018 / LMG 30748 / EbN1)</name>
    <name type="common">Azoarcus sp. (strain EbN1)</name>
    <dbReference type="NCBI Taxonomy" id="76114"/>
    <lineage>
        <taxon>Bacteria</taxon>
        <taxon>Pseudomonadati</taxon>
        <taxon>Pseudomonadota</taxon>
        <taxon>Betaproteobacteria</taxon>
        <taxon>Rhodocyclales</taxon>
        <taxon>Rhodocyclaceae</taxon>
        <taxon>Aromatoleum</taxon>
    </lineage>
</organism>
<proteinExistence type="inferred from homology"/>
<gene>
    <name type="ordered locus">AZOSEA28700</name>
    <name type="ORF">ebA5068</name>
</gene>
<dbReference type="EC" id="2.1.1.-"/>
<dbReference type="EMBL" id="CR555306">
    <property type="protein sequence ID" value="CAI08995.1"/>
    <property type="status" value="ALT_INIT"/>
    <property type="molecule type" value="Genomic_DNA"/>
</dbReference>
<dbReference type="RefSeq" id="WP_041647372.1">
    <property type="nucleotide sequence ID" value="NC_006513.1"/>
</dbReference>
<dbReference type="SMR" id="Q5P119"/>
<dbReference type="STRING" id="76114.ebA5068"/>
<dbReference type="KEGG" id="eba:ebA5068"/>
<dbReference type="eggNOG" id="COG0820">
    <property type="taxonomic scope" value="Bacteria"/>
</dbReference>
<dbReference type="HOGENOM" id="CLU_029101_3_3_4"/>
<dbReference type="OrthoDB" id="9793973at2"/>
<dbReference type="Proteomes" id="UP000006552">
    <property type="component" value="Chromosome"/>
</dbReference>
<dbReference type="GO" id="GO:0005737">
    <property type="term" value="C:cytoplasm"/>
    <property type="evidence" value="ECO:0007669"/>
    <property type="project" value="UniProtKB-SubCell"/>
</dbReference>
<dbReference type="GO" id="GO:0051539">
    <property type="term" value="F:4 iron, 4 sulfur cluster binding"/>
    <property type="evidence" value="ECO:0007669"/>
    <property type="project" value="UniProtKB-KW"/>
</dbReference>
<dbReference type="GO" id="GO:0046872">
    <property type="term" value="F:metal ion binding"/>
    <property type="evidence" value="ECO:0007669"/>
    <property type="project" value="UniProtKB-KW"/>
</dbReference>
<dbReference type="GO" id="GO:0008173">
    <property type="term" value="F:RNA methyltransferase activity"/>
    <property type="evidence" value="ECO:0007669"/>
    <property type="project" value="InterPro"/>
</dbReference>
<dbReference type="GO" id="GO:0070475">
    <property type="term" value="P:rRNA base methylation"/>
    <property type="evidence" value="ECO:0007669"/>
    <property type="project" value="TreeGrafter"/>
</dbReference>
<dbReference type="GO" id="GO:0030488">
    <property type="term" value="P:tRNA methylation"/>
    <property type="evidence" value="ECO:0007669"/>
    <property type="project" value="TreeGrafter"/>
</dbReference>
<dbReference type="Gene3D" id="3.20.20.70">
    <property type="entry name" value="Aldolase class I"/>
    <property type="match status" value="1"/>
</dbReference>
<dbReference type="InterPro" id="IPR013785">
    <property type="entry name" value="Aldolase_TIM"/>
</dbReference>
<dbReference type="InterPro" id="IPR040072">
    <property type="entry name" value="Methyltransferase_A"/>
</dbReference>
<dbReference type="InterPro" id="IPR004383">
    <property type="entry name" value="rRNA_lsu_MTrfase_RlmN/Cfr"/>
</dbReference>
<dbReference type="InterPro" id="IPR007197">
    <property type="entry name" value="rSAM"/>
</dbReference>
<dbReference type="NCBIfam" id="NF011034">
    <property type="entry name" value="PRK14464.1"/>
    <property type="match status" value="1"/>
</dbReference>
<dbReference type="PANTHER" id="PTHR30544">
    <property type="entry name" value="23S RRNA METHYLTRANSFERASE"/>
    <property type="match status" value="1"/>
</dbReference>
<dbReference type="PANTHER" id="PTHR30544:SF5">
    <property type="entry name" value="RADICAL SAM CORE DOMAIN-CONTAINING PROTEIN"/>
    <property type="match status" value="1"/>
</dbReference>
<dbReference type="Pfam" id="PF04055">
    <property type="entry name" value="Radical_SAM"/>
    <property type="match status" value="1"/>
</dbReference>
<dbReference type="SFLD" id="SFLDF00275">
    <property type="entry name" value="adenosine_C2_methyltransferase"/>
    <property type="match status" value="1"/>
</dbReference>
<dbReference type="SFLD" id="SFLDG01062">
    <property type="entry name" value="methyltransferase_(Class_A)"/>
    <property type="match status" value="1"/>
</dbReference>
<dbReference type="SUPFAM" id="SSF102114">
    <property type="entry name" value="Radical SAM enzymes"/>
    <property type="match status" value="1"/>
</dbReference>
<dbReference type="PROSITE" id="PS51918">
    <property type="entry name" value="RADICAL_SAM"/>
    <property type="match status" value="1"/>
</dbReference>
<sequence>MRIDHIRQRLRASGAKPCHEQRVLRAWTHALPLDRGRCRSEDFFPAPLGARLPALGAELAALAQVRSEHAGEDGARLLVELADGQTVESVLLPRDGLCVSTQVGCAVGCAFCMTGRDGLLRQLGSAEIVAQVVLARSRRAVRKVVFMGMGEPAHNLDNVLEAIALLGTEGGIGHKNLVFSTVGDRRVFERLPQGSVKPALALSLHTTRPALRTKLMPRAPRLDPAELVELGETYARATGYPIQYQWTLLAGVNDDDEELDGIVRLLAGKYAVMNFIPYNSVAGAGFARPSWEHAAAMARYLHRRGILTKLRHSAGQDVDGGCGQLRARVIASGALGQPAEAAPDRVVLVRRGQA</sequence>
<evidence type="ECO:0000250" key="1"/>
<evidence type="ECO:0000255" key="2"/>
<evidence type="ECO:0000255" key="3">
    <source>
        <dbReference type="PROSITE-ProRule" id="PRU01266"/>
    </source>
</evidence>
<evidence type="ECO:0000305" key="4"/>
<reference key="1">
    <citation type="journal article" date="2005" name="Arch. Microbiol.">
        <title>The genome sequence of an anaerobic aromatic-degrading denitrifying bacterium, strain EbN1.</title>
        <authorList>
            <person name="Rabus R."/>
            <person name="Kube M."/>
            <person name="Heider J."/>
            <person name="Beck A."/>
            <person name="Heitmann K."/>
            <person name="Widdel F."/>
            <person name="Reinhardt R."/>
        </authorList>
    </citation>
    <scope>NUCLEOTIDE SEQUENCE [LARGE SCALE GENOMIC DNA]</scope>
    <source>
        <strain>DSM 19018 / LMG 30748 / EbN1</strain>
    </source>
</reference>
<accession>Q5P119</accession>
<keyword id="KW-0004">4Fe-4S</keyword>
<keyword id="KW-0963">Cytoplasm</keyword>
<keyword id="KW-1015">Disulfide bond</keyword>
<keyword id="KW-0408">Iron</keyword>
<keyword id="KW-0411">Iron-sulfur</keyword>
<keyword id="KW-0479">Metal-binding</keyword>
<keyword id="KW-0489">Methyltransferase</keyword>
<keyword id="KW-1185">Reference proteome</keyword>
<keyword id="KW-0949">S-adenosyl-L-methionine</keyword>
<keyword id="KW-0808">Transferase</keyword>